<keyword id="KW-0520">NAD</keyword>
<keyword id="KW-0560">Oxidoreductase</keyword>
<keyword id="KW-0816">Tricarboxylic acid cycle</keyword>
<evidence type="ECO:0000255" key="1">
    <source>
        <dbReference type="HAMAP-Rule" id="MF_01516"/>
    </source>
</evidence>
<dbReference type="EC" id="1.1.1.37" evidence="1"/>
<dbReference type="EMBL" id="CP000950">
    <property type="protein sequence ID" value="ACA70028.1"/>
    <property type="molecule type" value="Genomic_DNA"/>
</dbReference>
<dbReference type="RefSeq" id="WP_002210174.1">
    <property type="nucleotide sequence ID" value="NZ_CP009792.1"/>
</dbReference>
<dbReference type="SMR" id="B1JMK1"/>
<dbReference type="GeneID" id="57975198"/>
<dbReference type="KEGG" id="ypy:YPK_3761"/>
<dbReference type="PATRIC" id="fig|502800.11.peg.111"/>
<dbReference type="GO" id="GO:0005737">
    <property type="term" value="C:cytoplasm"/>
    <property type="evidence" value="ECO:0007669"/>
    <property type="project" value="TreeGrafter"/>
</dbReference>
<dbReference type="GO" id="GO:0030060">
    <property type="term" value="F:L-malate dehydrogenase (NAD+) activity"/>
    <property type="evidence" value="ECO:0007669"/>
    <property type="project" value="UniProtKB-UniRule"/>
</dbReference>
<dbReference type="GO" id="GO:0006108">
    <property type="term" value="P:malate metabolic process"/>
    <property type="evidence" value="ECO:0007669"/>
    <property type="project" value="InterPro"/>
</dbReference>
<dbReference type="GO" id="GO:0006099">
    <property type="term" value="P:tricarboxylic acid cycle"/>
    <property type="evidence" value="ECO:0007669"/>
    <property type="project" value="UniProtKB-UniRule"/>
</dbReference>
<dbReference type="CDD" id="cd01337">
    <property type="entry name" value="MDH_glyoxysomal_mitochondrial"/>
    <property type="match status" value="1"/>
</dbReference>
<dbReference type="FunFam" id="3.40.50.720:FF:000017">
    <property type="entry name" value="Malate dehydrogenase"/>
    <property type="match status" value="1"/>
</dbReference>
<dbReference type="FunFam" id="3.90.110.10:FF:000001">
    <property type="entry name" value="Malate dehydrogenase"/>
    <property type="match status" value="1"/>
</dbReference>
<dbReference type="Gene3D" id="3.90.110.10">
    <property type="entry name" value="Lactate dehydrogenase/glycoside hydrolase, family 4, C-terminal"/>
    <property type="match status" value="1"/>
</dbReference>
<dbReference type="Gene3D" id="3.40.50.720">
    <property type="entry name" value="NAD(P)-binding Rossmann-like Domain"/>
    <property type="match status" value="1"/>
</dbReference>
<dbReference type="HAMAP" id="MF_01516">
    <property type="entry name" value="Malate_dehydrog_1"/>
    <property type="match status" value="1"/>
</dbReference>
<dbReference type="InterPro" id="IPR001557">
    <property type="entry name" value="L-lactate/malate_DH"/>
</dbReference>
<dbReference type="InterPro" id="IPR022383">
    <property type="entry name" value="Lactate/malate_DH_C"/>
</dbReference>
<dbReference type="InterPro" id="IPR001236">
    <property type="entry name" value="Lactate/malate_DH_N"/>
</dbReference>
<dbReference type="InterPro" id="IPR015955">
    <property type="entry name" value="Lactate_DH/Glyco_Ohase_4_C"/>
</dbReference>
<dbReference type="InterPro" id="IPR001252">
    <property type="entry name" value="Malate_DH_AS"/>
</dbReference>
<dbReference type="InterPro" id="IPR010097">
    <property type="entry name" value="Malate_DH_type1"/>
</dbReference>
<dbReference type="InterPro" id="IPR023958">
    <property type="entry name" value="Malate_DH_type1_bac"/>
</dbReference>
<dbReference type="InterPro" id="IPR036291">
    <property type="entry name" value="NAD(P)-bd_dom_sf"/>
</dbReference>
<dbReference type="NCBIfam" id="TIGR01772">
    <property type="entry name" value="MDH_euk_gproteo"/>
    <property type="match status" value="1"/>
</dbReference>
<dbReference type="PANTHER" id="PTHR11540">
    <property type="entry name" value="MALATE AND LACTATE DEHYDROGENASE"/>
    <property type="match status" value="1"/>
</dbReference>
<dbReference type="PANTHER" id="PTHR11540:SF16">
    <property type="entry name" value="MALATE DEHYDROGENASE, MITOCHONDRIAL"/>
    <property type="match status" value="1"/>
</dbReference>
<dbReference type="Pfam" id="PF02866">
    <property type="entry name" value="Ldh_1_C"/>
    <property type="match status" value="1"/>
</dbReference>
<dbReference type="Pfam" id="PF00056">
    <property type="entry name" value="Ldh_1_N"/>
    <property type="match status" value="1"/>
</dbReference>
<dbReference type="PIRSF" id="PIRSF000102">
    <property type="entry name" value="Lac_mal_DH"/>
    <property type="match status" value="1"/>
</dbReference>
<dbReference type="SUPFAM" id="SSF56327">
    <property type="entry name" value="LDH C-terminal domain-like"/>
    <property type="match status" value="1"/>
</dbReference>
<dbReference type="SUPFAM" id="SSF51735">
    <property type="entry name" value="NAD(P)-binding Rossmann-fold domains"/>
    <property type="match status" value="1"/>
</dbReference>
<dbReference type="PROSITE" id="PS00068">
    <property type="entry name" value="MDH"/>
    <property type="match status" value="1"/>
</dbReference>
<comment type="function">
    <text evidence="1">Catalyzes the reversible oxidation of malate to oxaloacetate.</text>
</comment>
<comment type="catalytic activity">
    <reaction evidence="1">
        <text>(S)-malate + NAD(+) = oxaloacetate + NADH + H(+)</text>
        <dbReference type="Rhea" id="RHEA:21432"/>
        <dbReference type="ChEBI" id="CHEBI:15378"/>
        <dbReference type="ChEBI" id="CHEBI:15589"/>
        <dbReference type="ChEBI" id="CHEBI:16452"/>
        <dbReference type="ChEBI" id="CHEBI:57540"/>
        <dbReference type="ChEBI" id="CHEBI:57945"/>
        <dbReference type="EC" id="1.1.1.37"/>
    </reaction>
</comment>
<comment type="subunit">
    <text evidence="1">Homodimer.</text>
</comment>
<comment type="similarity">
    <text evidence="1">Belongs to the LDH/MDH superfamily. MDH type 1 family.</text>
</comment>
<sequence>MKVAVLGAAGGIGQALALLLKTQLPSGSDLSLYDIAPVTPGVAVDLSHIPTAVNIKGFSGEDATPALQGADIVLISAGVARKPGMDRSDLFNVNAGIVRNLVEQIARTCPNALIGIITNPVNTTVAIAAEVLKKAGVYDKNKLFGITTLDTIRSNTFVAELKGKQPQDIEVPVIGGHSGVTILPLLSQIPGVSFTEQEVADLTKRIQNAGTEVVEAKAGGGSATLSMGQAAARFGLSLVRALQGESNVVECSYVEGDGKYARFFAQPILLGKNGVAERKDIGKLSAFEQQALENMLDVLHKDIELGEKFVNQ</sequence>
<protein>
    <recommendedName>
        <fullName evidence="1">Malate dehydrogenase</fullName>
        <ecNumber evidence="1">1.1.1.37</ecNumber>
    </recommendedName>
</protein>
<accession>B1JMK1</accession>
<feature type="chain" id="PRO_1000191602" description="Malate dehydrogenase">
    <location>
        <begin position="1"/>
        <end position="312"/>
    </location>
</feature>
<feature type="active site" description="Proton acceptor" evidence="1">
    <location>
        <position position="177"/>
    </location>
</feature>
<feature type="binding site" evidence="1">
    <location>
        <begin position="7"/>
        <end position="13"/>
    </location>
    <ligand>
        <name>NAD(+)</name>
        <dbReference type="ChEBI" id="CHEBI:57540"/>
    </ligand>
</feature>
<feature type="binding site" evidence="1">
    <location>
        <position position="34"/>
    </location>
    <ligand>
        <name>NAD(+)</name>
        <dbReference type="ChEBI" id="CHEBI:57540"/>
    </ligand>
</feature>
<feature type="binding site" evidence="1">
    <location>
        <position position="81"/>
    </location>
    <ligand>
        <name>substrate</name>
    </ligand>
</feature>
<feature type="binding site" evidence="1">
    <location>
        <position position="87"/>
    </location>
    <ligand>
        <name>substrate</name>
    </ligand>
</feature>
<feature type="binding site" evidence="1">
    <location>
        <position position="94"/>
    </location>
    <ligand>
        <name>NAD(+)</name>
        <dbReference type="ChEBI" id="CHEBI:57540"/>
    </ligand>
</feature>
<feature type="binding site" evidence="1">
    <location>
        <begin position="117"/>
        <end position="119"/>
    </location>
    <ligand>
        <name>NAD(+)</name>
        <dbReference type="ChEBI" id="CHEBI:57540"/>
    </ligand>
</feature>
<feature type="binding site" evidence="1">
    <location>
        <position position="119"/>
    </location>
    <ligand>
        <name>substrate</name>
    </ligand>
</feature>
<feature type="binding site" evidence="1">
    <location>
        <position position="153"/>
    </location>
    <ligand>
        <name>substrate</name>
    </ligand>
</feature>
<feature type="binding site" evidence="1">
    <location>
        <position position="227"/>
    </location>
    <ligand>
        <name>NAD(+)</name>
        <dbReference type="ChEBI" id="CHEBI:57540"/>
    </ligand>
</feature>
<gene>
    <name evidence="1" type="primary">mdh</name>
    <name type="ordered locus">YPK_3761</name>
</gene>
<organism>
    <name type="scientific">Yersinia pseudotuberculosis serotype O:3 (strain YPIII)</name>
    <dbReference type="NCBI Taxonomy" id="502800"/>
    <lineage>
        <taxon>Bacteria</taxon>
        <taxon>Pseudomonadati</taxon>
        <taxon>Pseudomonadota</taxon>
        <taxon>Gammaproteobacteria</taxon>
        <taxon>Enterobacterales</taxon>
        <taxon>Yersiniaceae</taxon>
        <taxon>Yersinia</taxon>
    </lineage>
</organism>
<proteinExistence type="inferred from homology"/>
<reference key="1">
    <citation type="submission" date="2008-02" db="EMBL/GenBank/DDBJ databases">
        <title>Complete sequence of Yersinia pseudotuberculosis YPIII.</title>
        <authorList>
            <consortium name="US DOE Joint Genome Institute"/>
            <person name="Copeland A."/>
            <person name="Lucas S."/>
            <person name="Lapidus A."/>
            <person name="Glavina del Rio T."/>
            <person name="Dalin E."/>
            <person name="Tice H."/>
            <person name="Bruce D."/>
            <person name="Goodwin L."/>
            <person name="Pitluck S."/>
            <person name="Munk A.C."/>
            <person name="Brettin T."/>
            <person name="Detter J.C."/>
            <person name="Han C."/>
            <person name="Tapia R."/>
            <person name="Schmutz J."/>
            <person name="Larimer F."/>
            <person name="Land M."/>
            <person name="Hauser L."/>
            <person name="Challacombe J.F."/>
            <person name="Green L."/>
            <person name="Lindler L.E."/>
            <person name="Nikolich M.P."/>
            <person name="Richardson P."/>
        </authorList>
    </citation>
    <scope>NUCLEOTIDE SEQUENCE [LARGE SCALE GENOMIC DNA]</scope>
    <source>
        <strain>YPIII</strain>
    </source>
</reference>
<name>MDH_YERPY</name>